<name>NEUFC_XENTR</name>
<gene>
    <name type="primary">cyb5d2</name>
    <name type="ORF">TNeu100j22.1</name>
</gene>
<feature type="signal peptide" evidence="2">
    <location>
        <begin position="1"/>
        <end position="22"/>
    </location>
</feature>
<feature type="chain" id="PRO_0000312325" description="Neuferricin">
    <location>
        <begin position="23"/>
        <end position="273"/>
    </location>
</feature>
<feature type="domain" description="Cytochrome b5 heme-binding">
    <location>
        <begin position="44"/>
        <end position="143"/>
    </location>
</feature>
<proteinExistence type="evidence at transcript level"/>
<organism>
    <name type="scientific">Xenopus tropicalis</name>
    <name type="common">Western clawed frog</name>
    <name type="synonym">Silurana tropicalis</name>
    <dbReference type="NCBI Taxonomy" id="8364"/>
    <lineage>
        <taxon>Eukaryota</taxon>
        <taxon>Metazoa</taxon>
        <taxon>Chordata</taxon>
        <taxon>Craniata</taxon>
        <taxon>Vertebrata</taxon>
        <taxon>Euteleostomi</taxon>
        <taxon>Amphibia</taxon>
        <taxon>Batrachia</taxon>
        <taxon>Anura</taxon>
        <taxon>Pipoidea</taxon>
        <taxon>Pipidae</taxon>
        <taxon>Xenopodinae</taxon>
        <taxon>Xenopus</taxon>
        <taxon>Silurana</taxon>
    </lineage>
</organism>
<dbReference type="EMBL" id="CR761951">
    <property type="protein sequence ID" value="CAJ82785.1"/>
    <property type="molecule type" value="mRNA"/>
</dbReference>
<dbReference type="RefSeq" id="NP_001016154.1">
    <property type="nucleotide sequence ID" value="NM_001016154.1"/>
</dbReference>
<dbReference type="SMR" id="Q28FI8"/>
<dbReference type="FunCoup" id="Q28FI8">
    <property type="interactions" value="1640"/>
</dbReference>
<dbReference type="STRING" id="8364.ENSXETP00000008693"/>
<dbReference type="PaxDb" id="8364-ENSXETP00000039513"/>
<dbReference type="GeneID" id="548908"/>
<dbReference type="KEGG" id="xtr:548908"/>
<dbReference type="AGR" id="Xenbase:XB-GENE-981419"/>
<dbReference type="CTD" id="124936"/>
<dbReference type="Xenbase" id="XB-GENE-981419">
    <property type="gene designation" value="cyb5d2"/>
</dbReference>
<dbReference type="eggNOG" id="KOG1108">
    <property type="taxonomic scope" value="Eukaryota"/>
</dbReference>
<dbReference type="HOGENOM" id="CLU_065455_0_0_1"/>
<dbReference type="InParanoid" id="Q28FI8"/>
<dbReference type="OMA" id="GHKHYGP"/>
<dbReference type="OrthoDB" id="10257697at2759"/>
<dbReference type="PhylomeDB" id="Q28FI8"/>
<dbReference type="TreeFam" id="TF313943"/>
<dbReference type="Proteomes" id="UP000008143">
    <property type="component" value="Chromosome 2"/>
</dbReference>
<dbReference type="Bgee" id="ENSXETG00000018225">
    <property type="expression patterns" value="Expressed in testis and 12 other cell types or tissues"/>
</dbReference>
<dbReference type="ExpressionAtlas" id="Q28FI8">
    <property type="expression patterns" value="baseline and differential"/>
</dbReference>
<dbReference type="GO" id="GO:0005576">
    <property type="term" value="C:extracellular region"/>
    <property type="evidence" value="ECO:0007669"/>
    <property type="project" value="UniProtKB-SubCell"/>
</dbReference>
<dbReference type="GO" id="GO:0007399">
    <property type="term" value="P:nervous system development"/>
    <property type="evidence" value="ECO:0007669"/>
    <property type="project" value="UniProtKB-KW"/>
</dbReference>
<dbReference type="Gene3D" id="3.10.120.10">
    <property type="entry name" value="Cytochrome b5-like heme/steroid binding domain"/>
    <property type="match status" value="1"/>
</dbReference>
<dbReference type="InterPro" id="IPR001199">
    <property type="entry name" value="Cyt_B5-like_heme/steroid-bd"/>
</dbReference>
<dbReference type="InterPro" id="IPR036400">
    <property type="entry name" value="Cyt_B5-like_heme/steroid_sf"/>
</dbReference>
<dbReference type="InterPro" id="IPR050577">
    <property type="entry name" value="MAPR/NEUFC/NENF-like"/>
</dbReference>
<dbReference type="PANTHER" id="PTHR10281">
    <property type="entry name" value="MEMBRANE-ASSOCIATED PROGESTERONE RECEPTOR COMPONENT-RELATED"/>
    <property type="match status" value="1"/>
</dbReference>
<dbReference type="PANTHER" id="PTHR10281:SF4">
    <property type="entry name" value="NEUFERRICIN"/>
    <property type="match status" value="1"/>
</dbReference>
<dbReference type="Pfam" id="PF00173">
    <property type="entry name" value="Cyt-b5"/>
    <property type="match status" value="1"/>
</dbReference>
<dbReference type="SMART" id="SM01117">
    <property type="entry name" value="Cyt-b5"/>
    <property type="match status" value="1"/>
</dbReference>
<dbReference type="SUPFAM" id="SSF55856">
    <property type="entry name" value="Cytochrome b5-like heme/steroid binding domain"/>
    <property type="match status" value="1"/>
</dbReference>
<evidence type="ECO:0000250" key="1"/>
<evidence type="ECO:0000255" key="2"/>
<evidence type="ECO:0000305" key="3"/>
<sequence length="273" mass="30527">MLGYLAAAALCLAAVLLMRLDHLPLVDIPGLGYIFPQQCELSEGRLMSKEELSVYDGGPGSSGIYLAILGQVFDVHKGSKHYGPGGSYSFFAGKDASRAYMTGDFTEKGLVDDVTELSPLQMLHLHNWLSFYQQNYITIGKLTGRFYDESGNPTKALEDALKVIDIGLKLKEEREEENKQFPPCNSEWSSESKRVWCSKNSGGIQRDWVGVPRKMYTAGTNGYRCVCVRNFGPPSEQPDSTEHNDRGDLDNPMLHEYEDCNPLFEWCFLKNGT</sequence>
<reference key="1">
    <citation type="submission" date="2006-10" db="EMBL/GenBank/DDBJ databases">
        <authorList>
            <consortium name="Sanger Xenopus tropicalis EST/cDNA project"/>
        </authorList>
    </citation>
    <scope>NUCLEOTIDE SEQUENCE [LARGE SCALE MRNA]</scope>
    <source>
        <tissue>Neurula</tissue>
    </source>
</reference>
<accession>Q28FI8</accession>
<protein>
    <recommendedName>
        <fullName>Neuferricin</fullName>
    </recommendedName>
    <alternativeName>
        <fullName>Cytochrome b5 domain-containing protein 2</fullName>
    </alternativeName>
</protein>
<keyword id="KW-0524">Neurogenesis</keyword>
<keyword id="KW-1185">Reference proteome</keyword>
<keyword id="KW-0964">Secreted</keyword>
<keyword id="KW-0732">Signal</keyword>
<comment type="function">
    <text evidence="1">Heme-binding protein which promotes neuronal but not astrocyte differentiation.</text>
</comment>
<comment type="subcellular location">
    <subcellularLocation>
        <location evidence="1">Secreted</location>
    </subcellularLocation>
</comment>
<comment type="domain">
    <text evidence="1">The cytochrome b5 heme-binding domain was proven to bind heme, although it lacks the conserved iron-binding His residues at position 82 and 124.</text>
</comment>
<comment type="similarity">
    <text evidence="3">Belongs to the cytochrome b5 family. MAPR subfamily.</text>
</comment>